<evidence type="ECO:0000255" key="1"/>
<evidence type="ECO:0000305" key="2"/>
<gene>
    <name type="primary">hasA</name>
</gene>
<sequence>MPIFKKTLIVLSFIFLISILIYLNMYLFGTSTVGIYGVILITYLVIKLGLSFLYEPFKGKPHDYKVAAVIPSYNEDAESLLETLKSVLAQTYPLSEIYIVDDGSSNTDAIQLIEEYVNREVDICRNVIVHRSLVNKGKRHAQAWAFERSDADVFLTVDSDTYIYPNALEELLKSFNDETVYAATGHLNARNRQTNLLTRLTDIRYDNAFGVERAAQSLTGNILVCSGPLSIYRREVIIPNLERYKNQTFLGLPVSIGDDRCLTNYAIDLGRTVYQSTARCDTDVPFQLKSYLKQQNRWNKSFFRESIISVKKILSNPIVALWTIFEVVMFMMLIVAIGNLLFNQAIQLDLIKLFAFLSIIFIVALCRNVHYMVKHPASFLLSPLYGILHLFVLQPLKLYSLCTIKNTEWGTRKKVTIFK</sequence>
<dbReference type="EC" id="2.4.1.212"/>
<dbReference type="EMBL" id="L21187">
    <property type="protein sequence ID" value="AAA17725.1"/>
    <property type="molecule type" value="Unassigned_DNA"/>
</dbReference>
<dbReference type="RefSeq" id="WP_011018340.1">
    <property type="nucleotide sequence ID" value="NZ_WXZH01000038.1"/>
</dbReference>
<dbReference type="SMR" id="P0C0H0"/>
<dbReference type="STRING" id="1314.SD89_09595"/>
<dbReference type="CAZy" id="GT2">
    <property type="family name" value="Glycosyltransferase Family 2"/>
</dbReference>
<dbReference type="TCDB" id="4.D.1.1.4">
    <property type="family name" value="the putative vectorial glycosyl polymerization (vgp) family"/>
</dbReference>
<dbReference type="eggNOG" id="COG1215">
    <property type="taxonomic scope" value="Bacteria"/>
</dbReference>
<dbReference type="SABIO-RK" id="P0C0H0"/>
<dbReference type="UniPathway" id="UPA00341"/>
<dbReference type="GO" id="GO:0005886">
    <property type="term" value="C:plasma membrane"/>
    <property type="evidence" value="ECO:0007669"/>
    <property type="project" value="UniProtKB-SubCell"/>
</dbReference>
<dbReference type="GO" id="GO:0050501">
    <property type="term" value="F:hyaluronan synthase activity"/>
    <property type="evidence" value="ECO:0007669"/>
    <property type="project" value="UniProtKB-EC"/>
</dbReference>
<dbReference type="GO" id="GO:0085029">
    <property type="term" value="P:extracellular matrix assembly"/>
    <property type="evidence" value="ECO:0007669"/>
    <property type="project" value="TreeGrafter"/>
</dbReference>
<dbReference type="GO" id="GO:0030213">
    <property type="term" value="P:hyaluronan biosynthetic process"/>
    <property type="evidence" value="ECO:0007669"/>
    <property type="project" value="UniProtKB-UniPathway"/>
</dbReference>
<dbReference type="GO" id="GO:0090609">
    <property type="term" value="P:single-species submerged biofilm formation"/>
    <property type="evidence" value="ECO:0000315"/>
    <property type="project" value="CACAO"/>
</dbReference>
<dbReference type="CDD" id="cd06423">
    <property type="entry name" value="CESA_like"/>
    <property type="match status" value="1"/>
</dbReference>
<dbReference type="Gene3D" id="3.90.550.10">
    <property type="entry name" value="Spore Coat Polysaccharide Biosynthesis Protein SpsA, Chain A"/>
    <property type="match status" value="1"/>
</dbReference>
<dbReference type="InterPro" id="IPR001173">
    <property type="entry name" value="Glyco_trans_2-like"/>
</dbReference>
<dbReference type="InterPro" id="IPR029044">
    <property type="entry name" value="Nucleotide-diphossugar_trans"/>
</dbReference>
<dbReference type="PANTHER" id="PTHR22913">
    <property type="entry name" value="HYALURONAN SYNTHASE"/>
    <property type="match status" value="1"/>
</dbReference>
<dbReference type="PANTHER" id="PTHR22913:SF12">
    <property type="entry name" value="MANNURONAN SYNTHASE"/>
    <property type="match status" value="1"/>
</dbReference>
<dbReference type="Pfam" id="PF00535">
    <property type="entry name" value="Glycos_transf_2"/>
    <property type="match status" value="1"/>
</dbReference>
<dbReference type="SUPFAM" id="SSF53448">
    <property type="entry name" value="Nucleotide-diphospho-sugar transferases"/>
    <property type="match status" value="1"/>
</dbReference>
<organism>
    <name type="scientific">Streptococcus pyogenes</name>
    <dbReference type="NCBI Taxonomy" id="1314"/>
    <lineage>
        <taxon>Bacteria</taxon>
        <taxon>Bacillati</taxon>
        <taxon>Bacillota</taxon>
        <taxon>Bacilli</taxon>
        <taxon>Lactobacillales</taxon>
        <taxon>Streptococcaceae</taxon>
        <taxon>Streptococcus</taxon>
    </lineage>
</organism>
<feature type="chain" id="PRO_0000197164" description="Hyaluronan synthase">
    <location>
        <begin position="1"/>
        <end position="419"/>
    </location>
</feature>
<feature type="transmembrane region" description="Helical" evidence="1">
    <location>
        <begin position="8"/>
        <end position="28"/>
    </location>
</feature>
<feature type="transmembrane region" description="Helical" evidence="1">
    <location>
        <begin position="33"/>
        <end position="53"/>
    </location>
</feature>
<feature type="transmembrane region" description="Helical" evidence="1">
    <location>
        <begin position="318"/>
        <end position="338"/>
    </location>
</feature>
<feature type="transmembrane region" description="Helical" evidence="1">
    <location>
        <begin position="345"/>
        <end position="365"/>
    </location>
</feature>
<feature type="transmembrane region" description="Helical" evidence="1">
    <location>
        <begin position="376"/>
        <end position="396"/>
    </location>
</feature>
<feature type="sequence conflict" description="In Ref. 1." evidence="2" ref="1">
    <original>K</original>
    <variation>N</variation>
    <location>
        <position position="60"/>
    </location>
</feature>
<keyword id="KW-0972">Capsule biogenesis/degradation</keyword>
<keyword id="KW-1003">Cell membrane</keyword>
<keyword id="KW-0328">Glycosyltransferase</keyword>
<keyword id="KW-0472">Membrane</keyword>
<keyword id="KW-0808">Transferase</keyword>
<keyword id="KW-0812">Transmembrane</keyword>
<keyword id="KW-1133">Transmembrane helix</keyword>
<keyword id="KW-0843">Virulence</keyword>
<proteinExistence type="inferred from homology"/>
<reference key="1">
    <citation type="journal article" date="1994" name="J. Biol. Chem.">
        <title>Molecular characterization of hasA from an operon required for hyaluronic acid synthesis in group A streptococci.</title>
        <authorList>
            <person name="Dougherty B.A."/>
            <person name="van de Rijn I."/>
        </authorList>
    </citation>
    <scope>NUCLEOTIDE SEQUENCE [GENOMIC DNA]</scope>
    <source>
        <strain>WF50</strain>
    </source>
</reference>
<name>HASA_STRPY</name>
<comment type="function">
    <text>Glycosaminoglycan synthesis. The hyaluronic acid capsule is involved in the pathogenicity of group A Streptococci; it may be the major virulence determinant.</text>
</comment>
<comment type="catalytic activity">
    <reaction>
        <text>[hyaluronan](n) + UDP-N-acetyl-alpha-D-glucosamine = N-acetyl-beta-D-glucosaminyl-(1-&gt;4)-[hyaluronan](n) + UDP + H(+)</text>
        <dbReference type="Rhea" id="RHEA:20465"/>
        <dbReference type="Rhea" id="RHEA-COMP:12583"/>
        <dbReference type="Rhea" id="RHEA-COMP:12585"/>
        <dbReference type="ChEBI" id="CHEBI:15378"/>
        <dbReference type="ChEBI" id="CHEBI:57705"/>
        <dbReference type="ChEBI" id="CHEBI:58223"/>
        <dbReference type="ChEBI" id="CHEBI:132153"/>
        <dbReference type="ChEBI" id="CHEBI:132154"/>
        <dbReference type="EC" id="2.4.1.212"/>
    </reaction>
</comment>
<comment type="catalytic activity">
    <reaction>
        <text>N-acetyl-beta-D-glucosaminyl-(1-&gt;4)-[hyaluronan](n) + UDP-alpha-D-glucuronate = [hyaluronan](n+1) + UDP + H(+)</text>
        <dbReference type="Rhea" id="RHEA:12528"/>
        <dbReference type="Rhea" id="RHEA-COMP:12585"/>
        <dbReference type="Rhea" id="RHEA-COMP:12587"/>
        <dbReference type="ChEBI" id="CHEBI:15378"/>
        <dbReference type="ChEBI" id="CHEBI:58052"/>
        <dbReference type="ChEBI" id="CHEBI:58223"/>
        <dbReference type="ChEBI" id="CHEBI:132153"/>
        <dbReference type="ChEBI" id="CHEBI:132154"/>
        <dbReference type="EC" id="2.4.1.212"/>
    </reaction>
</comment>
<comment type="cofactor">
    <cofactor>
        <name>Mg(2+)</name>
        <dbReference type="ChEBI" id="CHEBI:18420"/>
    </cofactor>
</comment>
<comment type="pathway">
    <text>Glycan biosynthesis; hyaluronan biosynthesis.</text>
</comment>
<comment type="subcellular location">
    <subcellularLocation>
        <location>Cell membrane</location>
        <topology>Multi-pass membrane protein</topology>
    </subcellularLocation>
</comment>
<comment type="similarity">
    <text evidence="2">Belongs to the NodC/HAS family.</text>
</comment>
<comment type="caution">
    <text evidence="2">It is uncertain whether Met-1 or Met-25 is the initiator.</text>
</comment>
<accession>P0C0H0</accession>
<accession>Q08494</accession>
<accession>Q54865</accession>
<accession>Q54868</accession>
<protein>
    <recommendedName>
        <fullName>Hyaluronan synthase</fullName>
        <ecNumber>2.4.1.212</ecNumber>
    </recommendedName>
    <alternativeName>
        <fullName>Hyaluronate synthase</fullName>
    </alternativeName>
    <alternativeName>
        <fullName>Hyaluronic acid synthase</fullName>
        <shortName>HA synthase</shortName>
    </alternativeName>
</protein>